<keyword id="KW-0030">Aminoacyl-tRNA synthetase</keyword>
<keyword id="KW-0067">ATP-binding</keyword>
<keyword id="KW-0963">Cytoplasm</keyword>
<keyword id="KW-0436">Ligase</keyword>
<keyword id="KW-0547">Nucleotide-binding</keyword>
<keyword id="KW-0648">Protein biosynthesis</keyword>
<keyword id="KW-1185">Reference proteome</keyword>
<sequence>MTMELEEIVYKYALWNAVKHNGQAQVGPVVSKVFAERPELKANAKEVVKLAEKMVAKVNAMSLEQQTAELQKYPELLEERKKEEKKTLSPLPNVKGTVVTRFAPNPDGPLHLGNARAAVLSFEYAKMYKGKFILRFDDTDPKVKKPIKEAYDWIRDDLRWLNITWDLEFKASERMSAYYNVAKVMLEKGFAYVDTLSDAEFKAWRDSRNKTVYKPRTNPPEVNLELWEKMLNGDFDEGKAVVRIKTNPEDPDPSKIDWVMLRIIDTKRNPHPIAGDKFRVWPTYNFATAVDDHEFGITHILRAKEHTTNTEKQRWVYDYMGWEMPTVLEFGRLKLEGFMMSKSKIRGMLETGSERDDPRLPTLAGLRRRGIIPDTVREIIIQVGLKVTDATISFDNIASVNRKLLDPVAKRLMFVREGVLFKLEIPQEMKAKVPLIPARQEFREIFVKPGDEIYLDKGDVEEGKVVRLMDLCNVKIEGDRLRFLSQDLESAKRMGANIIQWVKKSESKSVNVIKADPNKDVEEIRGYGEGYFETLKPGDIVQLVRYGFARVDSISRGEITMIFAHE</sequence>
<name>SYE_METS5</name>
<proteinExistence type="inferred from homology"/>
<reference key="1">
    <citation type="journal article" date="2008" name="Appl. Environ. Microbiol.">
        <title>The genome sequence of the metal-mobilizing, extremely thermoacidophilic archaeon Metallosphaera sedula provides insights into bioleaching-associated metabolism.</title>
        <authorList>
            <person name="Auernik K.S."/>
            <person name="Maezato Y."/>
            <person name="Blum P.H."/>
            <person name="Kelly R.M."/>
        </authorList>
    </citation>
    <scope>NUCLEOTIDE SEQUENCE [LARGE SCALE GENOMIC DNA]</scope>
    <source>
        <strain>ATCC 51363 / DSM 5348 / JCM 9185 / NBRC 15509 / TH2</strain>
    </source>
</reference>
<comment type="function">
    <text evidence="1">Catalyzes the attachment of glutamate to tRNA(Glu) in a two-step reaction: glutamate is first activated by ATP to form Glu-AMP and then transferred to the acceptor end of tRNA(Glu).</text>
</comment>
<comment type="catalytic activity">
    <reaction evidence="1">
        <text>tRNA(Glu) + L-glutamate + ATP = L-glutamyl-tRNA(Glu) + AMP + diphosphate</text>
        <dbReference type="Rhea" id="RHEA:23540"/>
        <dbReference type="Rhea" id="RHEA-COMP:9663"/>
        <dbReference type="Rhea" id="RHEA-COMP:9680"/>
        <dbReference type="ChEBI" id="CHEBI:29985"/>
        <dbReference type="ChEBI" id="CHEBI:30616"/>
        <dbReference type="ChEBI" id="CHEBI:33019"/>
        <dbReference type="ChEBI" id="CHEBI:78442"/>
        <dbReference type="ChEBI" id="CHEBI:78520"/>
        <dbReference type="ChEBI" id="CHEBI:456215"/>
        <dbReference type="EC" id="6.1.1.17"/>
    </reaction>
</comment>
<comment type="subcellular location">
    <subcellularLocation>
        <location evidence="1">Cytoplasm</location>
    </subcellularLocation>
</comment>
<comment type="similarity">
    <text evidence="1">Belongs to the class-I aminoacyl-tRNA synthetase family. Glutamate--tRNA ligase type 2 subfamily.</text>
</comment>
<protein>
    <recommendedName>
        <fullName evidence="1">Glutamate--tRNA ligase</fullName>
        <ecNumber evidence="1">6.1.1.17</ecNumber>
    </recommendedName>
    <alternativeName>
        <fullName evidence="1">Glutamyl-tRNA synthetase</fullName>
        <shortName evidence="1">GluRS</shortName>
    </alternativeName>
</protein>
<gene>
    <name evidence="1" type="primary">gltX</name>
    <name type="ordered locus">Msed_2131</name>
</gene>
<accession>A4YIL8</accession>
<dbReference type="EC" id="6.1.1.17" evidence="1"/>
<dbReference type="EMBL" id="CP000682">
    <property type="protein sequence ID" value="ABP96270.1"/>
    <property type="molecule type" value="Genomic_DNA"/>
</dbReference>
<dbReference type="RefSeq" id="WP_012022057.1">
    <property type="nucleotide sequence ID" value="NC_009440.1"/>
</dbReference>
<dbReference type="SMR" id="A4YIL8"/>
<dbReference type="STRING" id="399549.Msed_2131"/>
<dbReference type="GeneID" id="91756669"/>
<dbReference type="KEGG" id="mse:Msed_2131"/>
<dbReference type="eggNOG" id="arCOG04302">
    <property type="taxonomic scope" value="Archaea"/>
</dbReference>
<dbReference type="HOGENOM" id="CLU_001882_1_3_2"/>
<dbReference type="Proteomes" id="UP000000242">
    <property type="component" value="Chromosome"/>
</dbReference>
<dbReference type="GO" id="GO:0005829">
    <property type="term" value="C:cytosol"/>
    <property type="evidence" value="ECO:0007669"/>
    <property type="project" value="TreeGrafter"/>
</dbReference>
<dbReference type="GO" id="GO:0005524">
    <property type="term" value="F:ATP binding"/>
    <property type="evidence" value="ECO:0007669"/>
    <property type="project" value="UniProtKB-UniRule"/>
</dbReference>
<dbReference type="GO" id="GO:0004818">
    <property type="term" value="F:glutamate-tRNA ligase activity"/>
    <property type="evidence" value="ECO:0007669"/>
    <property type="project" value="UniProtKB-UniRule"/>
</dbReference>
<dbReference type="GO" id="GO:0043604">
    <property type="term" value="P:amide biosynthetic process"/>
    <property type="evidence" value="ECO:0007669"/>
    <property type="project" value="TreeGrafter"/>
</dbReference>
<dbReference type="GO" id="GO:0006424">
    <property type="term" value="P:glutamyl-tRNA aminoacylation"/>
    <property type="evidence" value="ECO:0007669"/>
    <property type="project" value="UniProtKB-UniRule"/>
</dbReference>
<dbReference type="Gene3D" id="2.40.240.100">
    <property type="match status" value="1"/>
</dbReference>
<dbReference type="Gene3D" id="3.40.50.620">
    <property type="entry name" value="HUPs"/>
    <property type="match status" value="1"/>
</dbReference>
<dbReference type="Gene3D" id="2.40.240.10">
    <property type="entry name" value="Ribosomal Protein L25, Chain P"/>
    <property type="match status" value="1"/>
</dbReference>
<dbReference type="HAMAP" id="MF_02076">
    <property type="entry name" value="Glu_tRNA_synth_type2"/>
    <property type="match status" value="1"/>
</dbReference>
<dbReference type="InterPro" id="IPR050132">
    <property type="entry name" value="Gln/Glu-tRNA_Ligase"/>
</dbReference>
<dbReference type="InterPro" id="IPR004526">
    <property type="entry name" value="Glu-tRNA-synth_arc/euk"/>
</dbReference>
<dbReference type="InterPro" id="IPR000924">
    <property type="entry name" value="Glu/Gln-tRNA-synth"/>
</dbReference>
<dbReference type="InterPro" id="IPR020058">
    <property type="entry name" value="Glu/Gln-tRNA-synth_Ib_cat-dom"/>
</dbReference>
<dbReference type="InterPro" id="IPR020059">
    <property type="entry name" value="Glu/Gln-tRNA-synth_Ib_codon-bd"/>
</dbReference>
<dbReference type="InterPro" id="IPR020056">
    <property type="entry name" value="Rbsml_bL25/Gln-tRNA_synth_N"/>
</dbReference>
<dbReference type="InterPro" id="IPR011035">
    <property type="entry name" value="Ribosomal_bL25/Gln-tRNA_synth"/>
</dbReference>
<dbReference type="InterPro" id="IPR014729">
    <property type="entry name" value="Rossmann-like_a/b/a_fold"/>
</dbReference>
<dbReference type="InterPro" id="IPR049437">
    <property type="entry name" value="tRNA-synt_1c_C2"/>
</dbReference>
<dbReference type="NCBIfam" id="TIGR00463">
    <property type="entry name" value="gltX_arch"/>
    <property type="match status" value="1"/>
</dbReference>
<dbReference type="NCBIfam" id="NF003169">
    <property type="entry name" value="PRK04156.1"/>
    <property type="match status" value="1"/>
</dbReference>
<dbReference type="PANTHER" id="PTHR43097:SF5">
    <property type="entry name" value="GLUTAMATE--TRNA LIGASE"/>
    <property type="match status" value="1"/>
</dbReference>
<dbReference type="PANTHER" id="PTHR43097">
    <property type="entry name" value="GLUTAMINE-TRNA LIGASE"/>
    <property type="match status" value="1"/>
</dbReference>
<dbReference type="Pfam" id="PF00749">
    <property type="entry name" value="tRNA-synt_1c"/>
    <property type="match status" value="1"/>
</dbReference>
<dbReference type="Pfam" id="PF03950">
    <property type="entry name" value="tRNA-synt_1c_C"/>
    <property type="match status" value="1"/>
</dbReference>
<dbReference type="Pfam" id="PF20974">
    <property type="entry name" value="tRNA-synt_1c_C2"/>
    <property type="match status" value="1"/>
</dbReference>
<dbReference type="PRINTS" id="PR00987">
    <property type="entry name" value="TRNASYNTHGLU"/>
</dbReference>
<dbReference type="SUPFAM" id="SSF52374">
    <property type="entry name" value="Nucleotidylyl transferase"/>
    <property type="match status" value="1"/>
</dbReference>
<dbReference type="SUPFAM" id="SSF50715">
    <property type="entry name" value="Ribosomal protein L25-like"/>
    <property type="match status" value="1"/>
</dbReference>
<organism>
    <name type="scientific">Metallosphaera sedula (strain ATCC 51363 / DSM 5348 / JCM 9185 / NBRC 15509 / TH2)</name>
    <dbReference type="NCBI Taxonomy" id="399549"/>
    <lineage>
        <taxon>Archaea</taxon>
        <taxon>Thermoproteota</taxon>
        <taxon>Thermoprotei</taxon>
        <taxon>Sulfolobales</taxon>
        <taxon>Sulfolobaceae</taxon>
        <taxon>Metallosphaera</taxon>
    </lineage>
</organism>
<evidence type="ECO:0000255" key="1">
    <source>
        <dbReference type="HAMAP-Rule" id="MF_02076"/>
    </source>
</evidence>
<feature type="chain" id="PRO_1000071001" description="Glutamate--tRNA ligase">
    <location>
        <begin position="1"/>
        <end position="566"/>
    </location>
</feature>
<feature type="short sequence motif" description="'HIGH' region" evidence="1">
    <location>
        <begin position="104"/>
        <end position="114"/>
    </location>
</feature>